<name>RDGC_DECAR</name>
<sequence length="304" mass="34412">MWFKNLQLYRLPTPWNIDLAKFDEQLSRGPFVKCPSNQPMSRGWVSPRRDGALVYSLGQQWMIALSVEQRLLPSSVVNEEVKERAELMEAQQGYAPGRKQLKELRERVTEELMPRAFTRRRTTYVWLDPKNGWFCVDAGSPAKAEEVIEHLRHCLDDFPLTMLHTQVSPQAAMADWLAGGDAPAGFTIDRDCELKAAGEEKAAVRYVRHPLGDEISGEIKAHLASGKMPTKLALTWDDRISFVLGEKMEIKRLAFLDLLKEEAEKSAEHADEQFDADFALMTGELSRFLPQLVEALGGEVVEAK</sequence>
<gene>
    <name evidence="1" type="primary">rdgC</name>
    <name type="ordered locus">Daro_3858</name>
</gene>
<feature type="chain" id="PRO_1000021206" description="Recombination-associated protein RdgC">
    <location>
        <begin position="1"/>
        <end position="304"/>
    </location>
</feature>
<comment type="function">
    <text evidence="1">May be involved in recombination.</text>
</comment>
<comment type="subcellular location">
    <subcellularLocation>
        <location evidence="1">Cytoplasm</location>
        <location evidence="1">Nucleoid</location>
    </subcellularLocation>
</comment>
<comment type="similarity">
    <text evidence="1">Belongs to the RdgC family.</text>
</comment>
<evidence type="ECO:0000255" key="1">
    <source>
        <dbReference type="HAMAP-Rule" id="MF_00194"/>
    </source>
</evidence>
<protein>
    <recommendedName>
        <fullName evidence="1">Recombination-associated protein RdgC</fullName>
    </recommendedName>
</protein>
<reference key="1">
    <citation type="journal article" date="2009" name="BMC Genomics">
        <title>Metabolic analysis of the soil microbe Dechloromonas aromatica str. RCB: indications of a surprisingly complex life-style and cryptic anaerobic pathways for aromatic degradation.</title>
        <authorList>
            <person name="Salinero K.K."/>
            <person name="Keller K."/>
            <person name="Feil W.S."/>
            <person name="Feil H."/>
            <person name="Trong S."/>
            <person name="Di Bartolo G."/>
            <person name="Lapidus A."/>
        </authorList>
    </citation>
    <scope>NUCLEOTIDE SEQUENCE [LARGE SCALE GENOMIC DNA]</scope>
    <source>
        <strain>RCB</strain>
    </source>
</reference>
<proteinExistence type="inferred from homology"/>
<accession>Q478Z5</accession>
<dbReference type="EMBL" id="CP000089">
    <property type="protein sequence ID" value="AAZ48586.1"/>
    <property type="molecule type" value="Genomic_DNA"/>
</dbReference>
<dbReference type="SMR" id="Q478Z5"/>
<dbReference type="STRING" id="159087.Daro_3858"/>
<dbReference type="KEGG" id="dar:Daro_3858"/>
<dbReference type="eggNOG" id="COG2974">
    <property type="taxonomic scope" value="Bacteria"/>
</dbReference>
<dbReference type="HOGENOM" id="CLU_052038_0_1_4"/>
<dbReference type="OrthoDB" id="5290530at2"/>
<dbReference type="GO" id="GO:0043590">
    <property type="term" value="C:bacterial nucleoid"/>
    <property type="evidence" value="ECO:0007669"/>
    <property type="project" value="TreeGrafter"/>
</dbReference>
<dbReference type="GO" id="GO:0005737">
    <property type="term" value="C:cytoplasm"/>
    <property type="evidence" value="ECO:0007669"/>
    <property type="project" value="UniProtKB-UniRule"/>
</dbReference>
<dbReference type="GO" id="GO:0003690">
    <property type="term" value="F:double-stranded DNA binding"/>
    <property type="evidence" value="ECO:0007669"/>
    <property type="project" value="TreeGrafter"/>
</dbReference>
<dbReference type="GO" id="GO:0006310">
    <property type="term" value="P:DNA recombination"/>
    <property type="evidence" value="ECO:0007669"/>
    <property type="project" value="UniProtKB-UniRule"/>
</dbReference>
<dbReference type="GO" id="GO:0000018">
    <property type="term" value="P:regulation of DNA recombination"/>
    <property type="evidence" value="ECO:0007669"/>
    <property type="project" value="TreeGrafter"/>
</dbReference>
<dbReference type="HAMAP" id="MF_00194">
    <property type="entry name" value="RdgC"/>
    <property type="match status" value="1"/>
</dbReference>
<dbReference type="InterPro" id="IPR007476">
    <property type="entry name" value="RdgC"/>
</dbReference>
<dbReference type="NCBIfam" id="NF001463">
    <property type="entry name" value="PRK00321.1-4"/>
    <property type="match status" value="1"/>
</dbReference>
<dbReference type="NCBIfam" id="NF001464">
    <property type="entry name" value="PRK00321.1-5"/>
    <property type="match status" value="1"/>
</dbReference>
<dbReference type="PANTHER" id="PTHR38103">
    <property type="entry name" value="RECOMBINATION-ASSOCIATED PROTEIN RDGC"/>
    <property type="match status" value="1"/>
</dbReference>
<dbReference type="PANTHER" id="PTHR38103:SF1">
    <property type="entry name" value="RECOMBINATION-ASSOCIATED PROTEIN RDGC"/>
    <property type="match status" value="1"/>
</dbReference>
<dbReference type="Pfam" id="PF04381">
    <property type="entry name" value="RdgC"/>
    <property type="match status" value="1"/>
</dbReference>
<organism>
    <name type="scientific">Dechloromonas aromatica (strain RCB)</name>
    <dbReference type="NCBI Taxonomy" id="159087"/>
    <lineage>
        <taxon>Bacteria</taxon>
        <taxon>Pseudomonadati</taxon>
        <taxon>Pseudomonadota</taxon>
        <taxon>Betaproteobacteria</taxon>
        <taxon>Rhodocyclales</taxon>
        <taxon>Azonexaceae</taxon>
        <taxon>Dechloromonas</taxon>
    </lineage>
</organism>
<keyword id="KW-0963">Cytoplasm</keyword>
<keyword id="KW-0233">DNA recombination</keyword>